<name>GNKL1_PICGL</name>
<organism>
    <name type="scientific">Picea glauca</name>
    <name type="common">White spruce</name>
    <name type="synonym">Pinus glauca</name>
    <dbReference type="NCBI Taxonomy" id="3330"/>
    <lineage>
        <taxon>Eukaryota</taxon>
        <taxon>Viridiplantae</taxon>
        <taxon>Streptophyta</taxon>
        <taxon>Embryophyta</taxon>
        <taxon>Tracheophyta</taxon>
        <taxon>Spermatophyta</taxon>
        <taxon>Pinopsida</taxon>
        <taxon>Pinidae</taxon>
        <taxon>Conifers I</taxon>
        <taxon>Pinales</taxon>
        <taxon>Pinaceae</taxon>
        <taxon>Picea</taxon>
    </lineage>
</organism>
<reference key="1">
    <citation type="journal article" date="1999" name="Plant Mol. Biol.">
        <title>Cloning and characterization of six embryogenesis-associated cDNAs from somatic embryos of Picea glauca and their comparative expression during zygotic embryogenesis.</title>
        <authorList>
            <person name="Dong J.-Z."/>
            <person name="Dunstan D.I."/>
        </authorList>
    </citation>
    <scope>NUCLEOTIDE SEQUENCE [MRNA]</scope>
    <scope>DEVELOPMENTAL STAGE</scope>
    <source>
        <tissue>Embryo</tissue>
    </source>
</reference>
<reference key="2">
    <citation type="journal article" date="2006" name="Mol. Ecol. Notes">
        <title>A set of polymorphic EST-derived markers for Picea species.</title>
        <authorList>
            <person name="Lamothe M."/>
            <person name="Meirmans P."/>
            <person name="Isabel N."/>
        </authorList>
        <dbReference type="AGRICOLA" id="IND43783961"/>
    </citation>
    <scope>NUCLEOTIDE SEQUENCE [GENOMIC DNA] OF 33-141</scope>
    <source>
        <tissue evidence="8">Needle</tissue>
    </source>
</reference>
<reference key="3">
    <citation type="journal article" date="2016" name="Protoplasma">
        <title>An antifungal protein from Ginkgo biloba binds actin and can trigger cell death.</title>
        <authorList>
            <person name="Gao N."/>
            <person name="Wadhwani P."/>
            <person name="Muehlhaeuser P."/>
            <person name="Liu Q."/>
            <person name="Riemann M."/>
            <person name="Ulrich A.S."/>
            <person name="Nick P."/>
        </authorList>
    </citation>
    <scope>IDENTIFICATION</scope>
</reference>
<sequence>MSISSKFQLRSSTSLLLLVALMVVMGMDGAAAAPNTNFVSSACNTQKIPSGNPFFTNLRAMLADLKQNTAFSGFDYKTSRAGSGGAPTAYGRAICKSSISQSDCSACLSNLVGRIWGICSNAIGARVQLTDCFIQYEQHSF</sequence>
<comment type="function">
    <text evidence="1">Exerts antifungal activity through its carbohydrate-binding specificity.</text>
</comment>
<comment type="developmental stage">
    <text evidence="4">Expressed during somatic and zygotic embryo development.</text>
</comment>
<evidence type="ECO:0000250" key="1">
    <source>
        <dbReference type="UniProtKB" id="A4ZDL6"/>
    </source>
</evidence>
<evidence type="ECO:0000255" key="2"/>
<evidence type="ECO:0000255" key="3">
    <source>
        <dbReference type="PROSITE-ProRule" id="PRU00806"/>
    </source>
</evidence>
<evidence type="ECO:0000269" key="4">
    <source>
    </source>
</evidence>
<evidence type="ECO:0000305" key="5"/>
<evidence type="ECO:0000312" key="6">
    <source>
        <dbReference type="EMBL" id="AAB01559.1"/>
    </source>
</evidence>
<evidence type="ECO:0000312" key="7">
    <source>
        <dbReference type="EMBL" id="ABA54794.1"/>
    </source>
</evidence>
<evidence type="ECO:0000312" key="8">
    <source>
        <dbReference type="EMBL" id="ABA54811.1"/>
    </source>
</evidence>
<gene>
    <name evidence="6 7 8" type="primary">EMB24</name>
</gene>
<proteinExistence type="evidence at transcript level"/>
<feature type="signal peptide" evidence="2">
    <location>
        <begin position="1"/>
        <end position="32"/>
    </location>
</feature>
<feature type="chain" id="PRO_5004231582" description="Antifungal protein ginkbilobin-like protein 1">
    <location>
        <begin position="33"/>
        <end position="141"/>
    </location>
</feature>
<feature type="domain" description="Gnk2-homologous" evidence="3">
    <location>
        <begin position="36"/>
        <end position="141"/>
    </location>
</feature>
<feature type="binding site" evidence="1">
    <location>
        <position position="44"/>
    </location>
    <ligand>
        <name>alpha-D-mannopyranose</name>
        <dbReference type="ChEBI" id="CHEBI:28729"/>
    </ligand>
</feature>
<feature type="binding site" evidence="1">
    <location>
        <position position="126"/>
    </location>
    <ligand>
        <name>alpha-D-mannopyranose</name>
        <dbReference type="ChEBI" id="CHEBI:28729"/>
    </ligand>
</feature>
<feature type="binding site" evidence="1">
    <location>
        <position position="137"/>
    </location>
    <ligand>
        <name>alpha-D-mannopyranose</name>
        <dbReference type="ChEBI" id="CHEBI:28729"/>
    </ligand>
</feature>
<feature type="disulfide bond" evidence="3">
    <location>
        <begin position="43"/>
        <end position="119"/>
    </location>
</feature>
<feature type="disulfide bond" evidence="3">
    <location>
        <begin position="95"/>
        <end position="104"/>
    </location>
</feature>
<feature type="disulfide bond" evidence="3">
    <location>
        <begin position="107"/>
        <end position="132"/>
    </location>
</feature>
<feature type="sequence conflict" description="In Ref. 2; ABA54794." evidence="5" ref="2">
    <original>T</original>
    <variation>N</variation>
    <location>
        <position position="56"/>
    </location>
</feature>
<feature type="sequence conflict" description="In Ref. 2; ABA54794." evidence="5" ref="2">
    <original>MLA</original>
    <variation>VLT</variation>
    <location>
        <begin position="61"/>
        <end position="63"/>
    </location>
</feature>
<keyword id="KW-0044">Antibiotic</keyword>
<keyword id="KW-0929">Antimicrobial</keyword>
<keyword id="KW-1015">Disulfide bond</keyword>
<keyword id="KW-0295">Fungicide</keyword>
<keyword id="KW-0430">Lectin</keyword>
<keyword id="KW-0465">Mannose-binding</keyword>
<keyword id="KW-0611">Plant defense</keyword>
<keyword id="KW-0732">Signal</keyword>
<accession>Q40849</accession>
<accession>Q3I3X1</accession>
<accession>Q3I3Y8</accession>
<protein>
    <recommendedName>
        <fullName evidence="5">Antifungal protein ginkbilobin-like protein 1</fullName>
    </recommendedName>
    <alternativeName>
        <fullName evidence="5">Embryo-abundant protein 24</fullName>
    </alternativeName>
</protein>
<dbReference type="EMBL" id="L47671">
    <property type="protein sequence ID" value="AAB01559.1"/>
    <property type="molecule type" value="mRNA"/>
</dbReference>
<dbReference type="EMBL" id="DQ120076">
    <property type="protein sequence ID" value="ABA54794.1"/>
    <property type="molecule type" value="Genomic_DNA"/>
</dbReference>
<dbReference type="EMBL" id="DQ120093">
    <property type="protein sequence ID" value="ABA54811.1"/>
    <property type="molecule type" value="Genomic_DNA"/>
</dbReference>
<dbReference type="PIR" id="T09251">
    <property type="entry name" value="T09251"/>
</dbReference>
<dbReference type="SMR" id="Q40849"/>
<dbReference type="GO" id="GO:0005537">
    <property type="term" value="F:D-mannose binding"/>
    <property type="evidence" value="ECO:0007669"/>
    <property type="project" value="UniProtKB-KW"/>
</dbReference>
<dbReference type="GO" id="GO:0042742">
    <property type="term" value="P:defense response to bacterium"/>
    <property type="evidence" value="ECO:0007669"/>
    <property type="project" value="UniProtKB-KW"/>
</dbReference>
<dbReference type="GO" id="GO:0050832">
    <property type="term" value="P:defense response to fungus"/>
    <property type="evidence" value="ECO:0000250"/>
    <property type="project" value="UniProtKB"/>
</dbReference>
<dbReference type="GO" id="GO:0031640">
    <property type="term" value="P:killing of cells of another organism"/>
    <property type="evidence" value="ECO:0007669"/>
    <property type="project" value="UniProtKB-KW"/>
</dbReference>
<dbReference type="CDD" id="cd23509">
    <property type="entry name" value="Gnk2-like"/>
    <property type="match status" value="1"/>
</dbReference>
<dbReference type="FunFam" id="3.30.430.20:FF:000039">
    <property type="entry name" value="Antifungal protein ginkbilobin-2"/>
    <property type="match status" value="1"/>
</dbReference>
<dbReference type="Gene3D" id="3.30.430.20">
    <property type="entry name" value="Gnk2 domain, C-X8-C-X2-C motif"/>
    <property type="match status" value="1"/>
</dbReference>
<dbReference type="InterPro" id="IPR051378">
    <property type="entry name" value="Cell2Cell_Antifungal"/>
</dbReference>
<dbReference type="InterPro" id="IPR002902">
    <property type="entry name" value="GNK2"/>
</dbReference>
<dbReference type="InterPro" id="IPR038408">
    <property type="entry name" value="GNK2_sf"/>
</dbReference>
<dbReference type="PANTHER" id="PTHR32080">
    <property type="entry name" value="ANTIFUNGAL PROTEIN GINKBILOBIN-2-LIKE"/>
    <property type="match status" value="1"/>
</dbReference>
<dbReference type="PANTHER" id="PTHR32080:SF54">
    <property type="entry name" value="GNK2-HOMOLOGOUS DOMAIN-CONTAINING PROTEIN"/>
    <property type="match status" value="1"/>
</dbReference>
<dbReference type="Pfam" id="PF01657">
    <property type="entry name" value="Stress-antifung"/>
    <property type="match status" value="1"/>
</dbReference>
<dbReference type="PROSITE" id="PS51473">
    <property type="entry name" value="GNK2"/>
    <property type="match status" value="1"/>
</dbReference>